<feature type="chain" id="PRO_1000093123" description="Glutamyl-tRNA reductase">
    <location>
        <begin position="1"/>
        <end position="426"/>
    </location>
</feature>
<feature type="active site" description="Nucleophile" evidence="1">
    <location>
        <position position="50"/>
    </location>
</feature>
<feature type="binding site" evidence="1">
    <location>
        <begin position="49"/>
        <end position="52"/>
    </location>
    <ligand>
        <name>substrate</name>
    </ligand>
</feature>
<feature type="binding site" evidence="1">
    <location>
        <position position="109"/>
    </location>
    <ligand>
        <name>substrate</name>
    </ligand>
</feature>
<feature type="binding site" evidence="1">
    <location>
        <begin position="114"/>
        <end position="116"/>
    </location>
    <ligand>
        <name>substrate</name>
    </ligand>
</feature>
<feature type="binding site" evidence="1">
    <location>
        <position position="120"/>
    </location>
    <ligand>
        <name>substrate</name>
    </ligand>
</feature>
<feature type="binding site" evidence="1">
    <location>
        <begin position="189"/>
        <end position="194"/>
    </location>
    <ligand>
        <name>NADP(+)</name>
        <dbReference type="ChEBI" id="CHEBI:58349"/>
    </ligand>
</feature>
<feature type="site" description="Important for activity" evidence="1">
    <location>
        <position position="99"/>
    </location>
</feature>
<accession>B3EPK1</accession>
<name>HEM1_CHLPB</name>
<dbReference type="EC" id="1.2.1.70" evidence="1"/>
<dbReference type="EMBL" id="CP001101">
    <property type="protein sequence ID" value="ACE03879.1"/>
    <property type="molecule type" value="Genomic_DNA"/>
</dbReference>
<dbReference type="SMR" id="B3EPK1"/>
<dbReference type="STRING" id="331678.Cphamn1_0934"/>
<dbReference type="KEGG" id="cpb:Cphamn1_0934"/>
<dbReference type="eggNOG" id="COG0373">
    <property type="taxonomic scope" value="Bacteria"/>
</dbReference>
<dbReference type="HOGENOM" id="CLU_035113_2_2_10"/>
<dbReference type="OrthoDB" id="110209at2"/>
<dbReference type="UniPathway" id="UPA00251">
    <property type="reaction ID" value="UER00316"/>
</dbReference>
<dbReference type="UniPathway" id="UPA00668"/>
<dbReference type="GO" id="GO:0008883">
    <property type="term" value="F:glutamyl-tRNA reductase activity"/>
    <property type="evidence" value="ECO:0007669"/>
    <property type="project" value="UniProtKB-UniRule"/>
</dbReference>
<dbReference type="GO" id="GO:0050661">
    <property type="term" value="F:NADP binding"/>
    <property type="evidence" value="ECO:0007669"/>
    <property type="project" value="InterPro"/>
</dbReference>
<dbReference type="GO" id="GO:0015995">
    <property type="term" value="P:chlorophyll biosynthetic process"/>
    <property type="evidence" value="ECO:0007669"/>
    <property type="project" value="UniProtKB-UniPathway"/>
</dbReference>
<dbReference type="GO" id="GO:0019353">
    <property type="term" value="P:protoporphyrinogen IX biosynthetic process from glutamate"/>
    <property type="evidence" value="ECO:0007669"/>
    <property type="project" value="TreeGrafter"/>
</dbReference>
<dbReference type="CDD" id="cd05213">
    <property type="entry name" value="NAD_bind_Glutamyl_tRNA_reduct"/>
    <property type="match status" value="1"/>
</dbReference>
<dbReference type="FunFam" id="3.30.460.30:FF:000001">
    <property type="entry name" value="Glutamyl-tRNA reductase"/>
    <property type="match status" value="1"/>
</dbReference>
<dbReference type="FunFam" id="3.40.50.720:FF:000031">
    <property type="entry name" value="Glutamyl-tRNA reductase"/>
    <property type="match status" value="1"/>
</dbReference>
<dbReference type="Gene3D" id="3.30.460.30">
    <property type="entry name" value="Glutamyl-tRNA reductase, N-terminal domain"/>
    <property type="match status" value="1"/>
</dbReference>
<dbReference type="Gene3D" id="3.40.50.720">
    <property type="entry name" value="NAD(P)-binding Rossmann-like Domain"/>
    <property type="match status" value="1"/>
</dbReference>
<dbReference type="HAMAP" id="MF_00087">
    <property type="entry name" value="Glu_tRNA_reductase"/>
    <property type="match status" value="1"/>
</dbReference>
<dbReference type="InterPro" id="IPR000343">
    <property type="entry name" value="4pyrrol_synth_GluRdtase"/>
</dbReference>
<dbReference type="InterPro" id="IPR015896">
    <property type="entry name" value="4pyrrol_synth_GluRdtase_dimer"/>
</dbReference>
<dbReference type="InterPro" id="IPR015895">
    <property type="entry name" value="4pyrrol_synth_GluRdtase_N"/>
</dbReference>
<dbReference type="InterPro" id="IPR018214">
    <property type="entry name" value="GluRdtase_CS"/>
</dbReference>
<dbReference type="InterPro" id="IPR036453">
    <property type="entry name" value="GluRdtase_dimer_dom_sf"/>
</dbReference>
<dbReference type="InterPro" id="IPR036343">
    <property type="entry name" value="GluRdtase_N_sf"/>
</dbReference>
<dbReference type="InterPro" id="IPR036291">
    <property type="entry name" value="NAD(P)-bd_dom_sf"/>
</dbReference>
<dbReference type="InterPro" id="IPR006151">
    <property type="entry name" value="Shikm_DH/Glu-tRNA_Rdtase"/>
</dbReference>
<dbReference type="NCBIfam" id="TIGR01035">
    <property type="entry name" value="hemA"/>
    <property type="match status" value="1"/>
</dbReference>
<dbReference type="PANTHER" id="PTHR43013">
    <property type="entry name" value="GLUTAMYL-TRNA REDUCTASE"/>
    <property type="match status" value="1"/>
</dbReference>
<dbReference type="PANTHER" id="PTHR43013:SF1">
    <property type="entry name" value="GLUTAMYL-TRNA REDUCTASE"/>
    <property type="match status" value="1"/>
</dbReference>
<dbReference type="Pfam" id="PF00745">
    <property type="entry name" value="GlutR_dimer"/>
    <property type="match status" value="1"/>
</dbReference>
<dbReference type="Pfam" id="PF05201">
    <property type="entry name" value="GlutR_N"/>
    <property type="match status" value="1"/>
</dbReference>
<dbReference type="Pfam" id="PF01488">
    <property type="entry name" value="Shikimate_DH"/>
    <property type="match status" value="1"/>
</dbReference>
<dbReference type="PIRSF" id="PIRSF000445">
    <property type="entry name" value="4pyrrol_synth_GluRdtase"/>
    <property type="match status" value="1"/>
</dbReference>
<dbReference type="SUPFAM" id="SSF69742">
    <property type="entry name" value="Glutamyl tRNA-reductase catalytic, N-terminal domain"/>
    <property type="match status" value="1"/>
</dbReference>
<dbReference type="SUPFAM" id="SSF69075">
    <property type="entry name" value="Glutamyl tRNA-reductase dimerization domain"/>
    <property type="match status" value="1"/>
</dbReference>
<dbReference type="SUPFAM" id="SSF51735">
    <property type="entry name" value="NAD(P)-binding Rossmann-fold domains"/>
    <property type="match status" value="1"/>
</dbReference>
<dbReference type="PROSITE" id="PS00747">
    <property type="entry name" value="GLUTR"/>
    <property type="match status" value="1"/>
</dbReference>
<comment type="function">
    <text evidence="1">Catalyzes the NADPH-dependent reduction of glutamyl-tRNA(Glu) to glutamate 1-semialdehyde (GSA).</text>
</comment>
<comment type="catalytic activity">
    <reaction evidence="1">
        <text>(S)-4-amino-5-oxopentanoate + tRNA(Glu) + NADP(+) = L-glutamyl-tRNA(Glu) + NADPH + H(+)</text>
        <dbReference type="Rhea" id="RHEA:12344"/>
        <dbReference type="Rhea" id="RHEA-COMP:9663"/>
        <dbReference type="Rhea" id="RHEA-COMP:9680"/>
        <dbReference type="ChEBI" id="CHEBI:15378"/>
        <dbReference type="ChEBI" id="CHEBI:57501"/>
        <dbReference type="ChEBI" id="CHEBI:57783"/>
        <dbReference type="ChEBI" id="CHEBI:58349"/>
        <dbReference type="ChEBI" id="CHEBI:78442"/>
        <dbReference type="ChEBI" id="CHEBI:78520"/>
        <dbReference type="EC" id="1.2.1.70"/>
    </reaction>
</comment>
<comment type="pathway">
    <text evidence="1">Porphyrin-containing compound metabolism; protoporphyrin-IX biosynthesis; 5-aminolevulinate from L-glutamyl-tRNA(Glu): step 1/2.</text>
</comment>
<comment type="pathway">
    <text evidence="1">Porphyrin-containing compound metabolism; chlorophyll biosynthesis.</text>
</comment>
<comment type="subunit">
    <text evidence="1">Homodimer.</text>
</comment>
<comment type="domain">
    <text evidence="1">Possesses an unusual extended V-shaped dimeric structure with each monomer consisting of three distinct domains arranged along a curved 'spinal' alpha-helix. The N-terminal catalytic domain specifically recognizes the glutamate moiety of the substrate. The second domain is the NADPH-binding domain, and the third C-terminal domain is responsible for dimerization.</text>
</comment>
<comment type="miscellaneous">
    <text evidence="1">During catalysis, the active site Cys acts as a nucleophile attacking the alpha-carbonyl group of tRNA-bound glutamate with the formation of a thioester intermediate between enzyme and glutamate, and the concomitant release of tRNA(Glu). The thioester intermediate is finally reduced by direct hydride transfer from NADPH, to form the product GSA.</text>
</comment>
<comment type="similarity">
    <text evidence="1">Belongs to the glutamyl-tRNA reductase family.</text>
</comment>
<reference key="1">
    <citation type="submission" date="2008-06" db="EMBL/GenBank/DDBJ databases">
        <title>Complete sequence of Chlorobium phaeobacteroides BS1.</title>
        <authorList>
            <consortium name="US DOE Joint Genome Institute"/>
            <person name="Lucas S."/>
            <person name="Copeland A."/>
            <person name="Lapidus A."/>
            <person name="Glavina del Rio T."/>
            <person name="Dalin E."/>
            <person name="Tice H."/>
            <person name="Bruce D."/>
            <person name="Goodwin L."/>
            <person name="Pitluck S."/>
            <person name="Schmutz J."/>
            <person name="Larimer F."/>
            <person name="Land M."/>
            <person name="Hauser L."/>
            <person name="Kyrpides N."/>
            <person name="Ovchinnikova G."/>
            <person name="Li T."/>
            <person name="Liu Z."/>
            <person name="Zhao F."/>
            <person name="Overmann J."/>
            <person name="Bryant D.A."/>
            <person name="Richardson P."/>
        </authorList>
    </citation>
    <scope>NUCLEOTIDE SEQUENCE [LARGE SCALE GENOMIC DNA]</scope>
    <source>
        <strain>BS1</strain>
    </source>
</reference>
<protein>
    <recommendedName>
        <fullName evidence="1">Glutamyl-tRNA reductase</fullName>
        <shortName evidence="1">GluTR</shortName>
        <ecNumber evidence="1">1.2.1.70</ecNumber>
    </recommendedName>
</protein>
<organism>
    <name type="scientific">Chlorobium phaeobacteroides (strain BS1)</name>
    <dbReference type="NCBI Taxonomy" id="331678"/>
    <lineage>
        <taxon>Bacteria</taxon>
        <taxon>Pseudomonadati</taxon>
        <taxon>Chlorobiota</taxon>
        <taxon>Chlorobiia</taxon>
        <taxon>Chlorobiales</taxon>
        <taxon>Chlorobiaceae</taxon>
        <taxon>Chlorobium/Pelodictyon group</taxon>
        <taxon>Chlorobium</taxon>
    </lineage>
</organism>
<sequence>MNIISVGVNHKTAPIEIRERLSLSEVQAKEFLTNLIDDGIAQEAMVVSTCNRTELYVVPGMPEVDGNYMKEFLISYKDAQGEVRPEHFFNRFYCNTARHLFEVSSAVDSLILGEGQILGQVKNAYRIAVEVQSAGILLTRLCHTAFSVAKKVKTKTKIMEGAVSVSYAAVELAQKIFSNLSIKKILLVGAGETGELAAKHMFQKNARNIVITNRTLSKAEALAEELGTNQVLPYESYKDHLHEFDIIITAVSSKEYVLTEPELQQSMQKRRLKPVIILDLGLPRNVDPEIGNLKNMFLKDIDALKHIIDKNLEMRKCELPKVKKIIDEELVGFAQWINTLKVRPTIVDLQSKFLEIKEKELERFRYKVSDAELKRMERLTDRILKKILHHPIKMLKAPVDTADTIPSRVNLVRNIFDLEEQNRLSK</sequence>
<evidence type="ECO:0000255" key="1">
    <source>
        <dbReference type="HAMAP-Rule" id="MF_00087"/>
    </source>
</evidence>
<gene>
    <name evidence="1" type="primary">hemA</name>
    <name type="ordered locus">Cphamn1_0934</name>
</gene>
<proteinExistence type="inferred from homology"/>
<keyword id="KW-0149">Chlorophyll biosynthesis</keyword>
<keyword id="KW-0521">NADP</keyword>
<keyword id="KW-0560">Oxidoreductase</keyword>
<keyword id="KW-0627">Porphyrin biosynthesis</keyword>